<keyword id="KW-1003">Cell membrane</keyword>
<keyword id="KW-0472">Membrane</keyword>
<keyword id="KW-1185">Reference proteome</keyword>
<keyword id="KW-0812">Transmembrane</keyword>
<keyword id="KW-1133">Transmembrane helix</keyword>
<accession>B2HEY1</accession>
<organism>
    <name type="scientific">Mycobacterium marinum (strain ATCC BAA-535 / M)</name>
    <dbReference type="NCBI Taxonomy" id="216594"/>
    <lineage>
        <taxon>Bacteria</taxon>
        <taxon>Bacillati</taxon>
        <taxon>Actinomycetota</taxon>
        <taxon>Actinomycetes</taxon>
        <taxon>Mycobacteriales</taxon>
        <taxon>Mycobacteriaceae</taxon>
        <taxon>Mycobacterium</taxon>
        <taxon>Mycobacterium ulcerans group</taxon>
    </lineage>
</organism>
<evidence type="ECO:0000255" key="1">
    <source>
        <dbReference type="HAMAP-Rule" id="MF_00010"/>
    </source>
</evidence>
<gene>
    <name type="ordered locus">MMAR_2961</name>
</gene>
<name>Y2961_MYCMM</name>
<proteinExistence type="inferred from homology"/>
<feature type="chain" id="PRO_1000089248" description="UPF0060 membrane protein MMAR_2961">
    <location>
        <begin position="1"/>
        <end position="110"/>
    </location>
</feature>
<feature type="transmembrane region" description="Helical" evidence="1">
    <location>
        <begin position="6"/>
        <end position="26"/>
    </location>
</feature>
<feature type="transmembrane region" description="Helical" evidence="1">
    <location>
        <begin position="32"/>
        <end position="52"/>
    </location>
</feature>
<feature type="transmembrane region" description="Helical" evidence="1">
    <location>
        <begin position="61"/>
        <end position="81"/>
    </location>
</feature>
<feature type="transmembrane region" description="Helical" evidence="1">
    <location>
        <begin position="90"/>
        <end position="110"/>
    </location>
</feature>
<protein>
    <recommendedName>
        <fullName evidence="1">UPF0060 membrane protein MMAR_2961</fullName>
    </recommendedName>
</protein>
<reference key="1">
    <citation type="journal article" date="2008" name="Genome Res.">
        <title>Insights from the complete genome sequence of Mycobacterium marinum on the evolution of Mycobacterium tuberculosis.</title>
        <authorList>
            <person name="Stinear T.P."/>
            <person name="Seemann T."/>
            <person name="Harrison P.F."/>
            <person name="Jenkin G.A."/>
            <person name="Davies J.K."/>
            <person name="Johnson P.D."/>
            <person name="Abdellah Z."/>
            <person name="Arrowsmith C."/>
            <person name="Chillingworth T."/>
            <person name="Churcher C."/>
            <person name="Clarke K."/>
            <person name="Cronin A."/>
            <person name="Davis P."/>
            <person name="Goodhead I."/>
            <person name="Holroyd N."/>
            <person name="Jagels K."/>
            <person name="Lord A."/>
            <person name="Moule S."/>
            <person name="Mungall K."/>
            <person name="Norbertczak H."/>
            <person name="Quail M.A."/>
            <person name="Rabbinowitsch E."/>
            <person name="Walker D."/>
            <person name="White B."/>
            <person name="Whitehead S."/>
            <person name="Small P.L."/>
            <person name="Brosch R."/>
            <person name="Ramakrishnan L."/>
            <person name="Fischbach M.A."/>
            <person name="Parkhill J."/>
            <person name="Cole S.T."/>
        </authorList>
    </citation>
    <scope>NUCLEOTIDE SEQUENCE [LARGE SCALE GENOMIC DNA]</scope>
    <source>
        <strain>ATCC BAA-535 / M</strain>
    </source>
</reference>
<comment type="subcellular location">
    <subcellularLocation>
        <location evidence="1">Cell membrane</location>
        <topology evidence="1">Multi-pass membrane protein</topology>
    </subcellularLocation>
</comment>
<comment type="similarity">
    <text evidence="1">Belongs to the UPF0060 family.</text>
</comment>
<sequence>MVVRSILLFIVAAVAEIGGAWLVWQGVREQRGLAWIGAGVIALGLYGFVATLQPDAHFGRILAAYGGIFVAGSLLWGMAFDGFRPDRADIVGALVCLAGVGVIMYAPRAH</sequence>
<dbReference type="EMBL" id="CP000854">
    <property type="protein sequence ID" value="ACC41399.1"/>
    <property type="molecule type" value="Genomic_DNA"/>
</dbReference>
<dbReference type="RefSeq" id="WP_012394655.1">
    <property type="nucleotide sequence ID" value="NC_010612.1"/>
</dbReference>
<dbReference type="SMR" id="B2HEY1"/>
<dbReference type="STRING" id="216594.MMAR_2961"/>
<dbReference type="KEGG" id="mmi:MMAR_2961"/>
<dbReference type="eggNOG" id="COG1742">
    <property type="taxonomic scope" value="Bacteria"/>
</dbReference>
<dbReference type="HOGENOM" id="CLU_117653_0_1_11"/>
<dbReference type="OrthoDB" id="123240at2"/>
<dbReference type="Proteomes" id="UP000001190">
    <property type="component" value="Chromosome"/>
</dbReference>
<dbReference type="GO" id="GO:0005886">
    <property type="term" value="C:plasma membrane"/>
    <property type="evidence" value="ECO:0007669"/>
    <property type="project" value="UniProtKB-SubCell"/>
</dbReference>
<dbReference type="HAMAP" id="MF_00010">
    <property type="entry name" value="UPF0060"/>
    <property type="match status" value="1"/>
</dbReference>
<dbReference type="InterPro" id="IPR003844">
    <property type="entry name" value="UPF0060"/>
</dbReference>
<dbReference type="NCBIfam" id="NF002586">
    <property type="entry name" value="PRK02237.1"/>
    <property type="match status" value="1"/>
</dbReference>
<dbReference type="PANTHER" id="PTHR36116">
    <property type="entry name" value="UPF0060 MEMBRANE PROTEIN YNFA"/>
    <property type="match status" value="1"/>
</dbReference>
<dbReference type="PANTHER" id="PTHR36116:SF1">
    <property type="entry name" value="UPF0060 MEMBRANE PROTEIN YNFA"/>
    <property type="match status" value="1"/>
</dbReference>
<dbReference type="Pfam" id="PF02694">
    <property type="entry name" value="UPF0060"/>
    <property type="match status" value="1"/>
</dbReference>
<dbReference type="SUPFAM" id="SSF103481">
    <property type="entry name" value="Multidrug resistance efflux transporter EmrE"/>
    <property type="match status" value="1"/>
</dbReference>